<comment type="function">
    <text evidence="1">Transcription factor that specifically binds AT-rich DNA sequences related to the nuclear matrix attachment regions (MARs).</text>
</comment>
<comment type="subunit">
    <text evidence="5">Homodimer. Interacts with AHL27, AHL29 and ATAF2/NAC081.</text>
</comment>
<comment type="interaction">
    <interactant intactId="EBI-4428689">
        <id>Q8LPN5</id>
    </interactant>
    <interactant intactId="EBI-4426649">
        <id>Q17TI5</id>
        <label>BRX</label>
    </interactant>
    <organismsDiffer>false</organismsDiffer>
    <experiments>3</experiments>
</comment>
<comment type="subcellular location">
    <subcellularLocation>
        <location evidence="1">Nucleus</location>
    </subcellularLocation>
</comment>
<comment type="domain">
    <text evidence="5">The PPC domain mediates interactions between AHL proteins.</text>
</comment>
<comment type="sequence caution" evidence="7">
    <conflict type="erroneous gene model prediction">
        <sequence resource="EMBL-CDS" id="AAF19697"/>
    </conflict>
</comment>
<comment type="sequence caution" evidence="7">
    <conflict type="erroneous initiation">
        <sequence resource="EMBL-CDS" id="AAL49880"/>
    </conflict>
    <text>Truncated N-terminus.</text>
</comment>
<protein>
    <recommendedName>
        <fullName evidence="10">AT-hook motif nuclear-localized protein 12</fullName>
    </recommendedName>
</protein>
<evidence type="ECO:0000250" key="1">
    <source>
        <dbReference type="UniProtKB" id="Q8VYJ2"/>
    </source>
</evidence>
<evidence type="ECO:0000255" key="2"/>
<evidence type="ECO:0000255" key="3">
    <source>
        <dbReference type="PROSITE-ProRule" id="PRU01078"/>
    </source>
</evidence>
<evidence type="ECO:0000256" key="4">
    <source>
        <dbReference type="SAM" id="MobiDB-lite"/>
    </source>
</evidence>
<evidence type="ECO:0000269" key="5">
    <source>
    </source>
</evidence>
<evidence type="ECO:0000303" key="6">
    <source>
    </source>
</evidence>
<evidence type="ECO:0000305" key="7"/>
<evidence type="ECO:0000312" key="8">
    <source>
        <dbReference type="Araport" id="AT1G63480"/>
    </source>
</evidence>
<evidence type="ECO:0000312" key="9">
    <source>
        <dbReference type="EMBL" id="AAF19697.1"/>
    </source>
</evidence>
<evidence type="ECO:0000312" key="10">
    <source>
        <dbReference type="EMBL" id="FAA00283.1"/>
    </source>
</evidence>
<keyword id="KW-0238">DNA-binding</keyword>
<keyword id="KW-0539">Nucleus</keyword>
<keyword id="KW-1185">Reference proteome</keyword>
<keyword id="KW-0677">Repeat</keyword>
<keyword id="KW-0804">Transcription</keyword>
<keyword id="KW-0805">Transcription regulation</keyword>
<reference key="1">
    <citation type="journal article" date="2000" name="Nature">
        <title>Sequence and analysis of chromosome 1 of the plant Arabidopsis thaliana.</title>
        <authorList>
            <person name="Theologis A."/>
            <person name="Ecker J.R."/>
            <person name="Palm C.J."/>
            <person name="Federspiel N.A."/>
            <person name="Kaul S."/>
            <person name="White O."/>
            <person name="Alonso J."/>
            <person name="Altafi H."/>
            <person name="Araujo R."/>
            <person name="Bowman C.L."/>
            <person name="Brooks S.Y."/>
            <person name="Buehler E."/>
            <person name="Chan A."/>
            <person name="Chao Q."/>
            <person name="Chen H."/>
            <person name="Cheuk R.F."/>
            <person name="Chin C.W."/>
            <person name="Chung M.K."/>
            <person name="Conn L."/>
            <person name="Conway A.B."/>
            <person name="Conway A.R."/>
            <person name="Creasy T.H."/>
            <person name="Dewar K."/>
            <person name="Dunn P."/>
            <person name="Etgu P."/>
            <person name="Feldblyum T.V."/>
            <person name="Feng J.-D."/>
            <person name="Fong B."/>
            <person name="Fujii C.Y."/>
            <person name="Gill J.E."/>
            <person name="Goldsmith A.D."/>
            <person name="Haas B."/>
            <person name="Hansen N.F."/>
            <person name="Hughes B."/>
            <person name="Huizar L."/>
            <person name="Hunter J.L."/>
            <person name="Jenkins J."/>
            <person name="Johnson-Hopson C."/>
            <person name="Khan S."/>
            <person name="Khaykin E."/>
            <person name="Kim C.J."/>
            <person name="Koo H.L."/>
            <person name="Kremenetskaia I."/>
            <person name="Kurtz D.B."/>
            <person name="Kwan A."/>
            <person name="Lam B."/>
            <person name="Langin-Hooper S."/>
            <person name="Lee A."/>
            <person name="Lee J.M."/>
            <person name="Lenz C.A."/>
            <person name="Li J.H."/>
            <person name="Li Y.-P."/>
            <person name="Lin X."/>
            <person name="Liu S.X."/>
            <person name="Liu Z.A."/>
            <person name="Luros J.S."/>
            <person name="Maiti R."/>
            <person name="Marziali A."/>
            <person name="Militscher J."/>
            <person name="Miranda M."/>
            <person name="Nguyen M."/>
            <person name="Nierman W.C."/>
            <person name="Osborne B.I."/>
            <person name="Pai G."/>
            <person name="Peterson J."/>
            <person name="Pham P.K."/>
            <person name="Rizzo M."/>
            <person name="Rooney T."/>
            <person name="Rowley D."/>
            <person name="Sakano H."/>
            <person name="Salzberg S.L."/>
            <person name="Schwartz J.R."/>
            <person name="Shinn P."/>
            <person name="Southwick A.M."/>
            <person name="Sun H."/>
            <person name="Tallon L.J."/>
            <person name="Tambunga G."/>
            <person name="Toriumi M.J."/>
            <person name="Town C.D."/>
            <person name="Utterback T."/>
            <person name="Van Aken S."/>
            <person name="Vaysberg M."/>
            <person name="Vysotskaia V.S."/>
            <person name="Walker M."/>
            <person name="Wu D."/>
            <person name="Yu G."/>
            <person name="Fraser C.M."/>
            <person name="Venter J.C."/>
            <person name="Davis R.W."/>
        </authorList>
    </citation>
    <scope>NUCLEOTIDE SEQUENCE [LARGE SCALE GENOMIC DNA]</scope>
    <source>
        <strain>cv. Columbia</strain>
    </source>
</reference>
<reference key="2">
    <citation type="journal article" date="2017" name="Plant J.">
        <title>Araport11: a complete reannotation of the Arabidopsis thaliana reference genome.</title>
        <authorList>
            <person name="Cheng C.Y."/>
            <person name="Krishnakumar V."/>
            <person name="Chan A.P."/>
            <person name="Thibaud-Nissen F."/>
            <person name="Schobel S."/>
            <person name="Town C.D."/>
        </authorList>
    </citation>
    <scope>GENOME REANNOTATION</scope>
    <source>
        <strain>cv. Columbia</strain>
    </source>
</reference>
<reference key="3">
    <citation type="journal article" date="2003" name="Science">
        <title>Empirical analysis of transcriptional activity in the Arabidopsis genome.</title>
        <authorList>
            <person name="Yamada K."/>
            <person name="Lim J."/>
            <person name="Dale J.M."/>
            <person name="Chen H."/>
            <person name="Shinn P."/>
            <person name="Palm C.J."/>
            <person name="Southwick A.M."/>
            <person name="Wu H.C."/>
            <person name="Kim C.J."/>
            <person name="Nguyen M."/>
            <person name="Pham P.K."/>
            <person name="Cheuk R.F."/>
            <person name="Karlin-Newmann G."/>
            <person name="Liu S.X."/>
            <person name="Lam B."/>
            <person name="Sakano H."/>
            <person name="Wu T."/>
            <person name="Yu G."/>
            <person name="Miranda M."/>
            <person name="Quach H.L."/>
            <person name="Tripp M."/>
            <person name="Chang C.H."/>
            <person name="Lee J.M."/>
            <person name="Toriumi M.J."/>
            <person name="Chan M.M."/>
            <person name="Tang C.C."/>
            <person name="Onodera C.S."/>
            <person name="Deng J.M."/>
            <person name="Akiyama K."/>
            <person name="Ansari Y."/>
            <person name="Arakawa T."/>
            <person name="Banh J."/>
            <person name="Banno F."/>
            <person name="Bowser L."/>
            <person name="Brooks S.Y."/>
            <person name="Carninci P."/>
            <person name="Chao Q."/>
            <person name="Choy N."/>
            <person name="Enju A."/>
            <person name="Goldsmith A.D."/>
            <person name="Gurjal M."/>
            <person name="Hansen N.F."/>
            <person name="Hayashizaki Y."/>
            <person name="Johnson-Hopson C."/>
            <person name="Hsuan V.W."/>
            <person name="Iida K."/>
            <person name="Karnes M."/>
            <person name="Khan S."/>
            <person name="Koesema E."/>
            <person name="Ishida J."/>
            <person name="Jiang P.X."/>
            <person name="Jones T."/>
            <person name="Kawai J."/>
            <person name="Kamiya A."/>
            <person name="Meyers C."/>
            <person name="Nakajima M."/>
            <person name="Narusaka M."/>
            <person name="Seki M."/>
            <person name="Sakurai T."/>
            <person name="Satou M."/>
            <person name="Tamse R."/>
            <person name="Vaysberg M."/>
            <person name="Wallender E.K."/>
            <person name="Wong C."/>
            <person name="Yamamura Y."/>
            <person name="Yuan S."/>
            <person name="Shinozaki K."/>
            <person name="Davis R.W."/>
            <person name="Theologis A."/>
            <person name="Ecker J.R."/>
        </authorList>
    </citation>
    <scope>NUCLEOTIDE SEQUENCE [LARGE SCALE MRNA]</scope>
    <source>
        <strain>cv. Columbia</strain>
    </source>
</reference>
<reference key="4">
    <citation type="journal article" date="2004" name="Plant Mol. Biol.">
        <title>Identification of a novel plant MAR DNA binding protein localized on chromosomal surfaces.</title>
        <authorList>
            <person name="Fujimoto S."/>
            <person name="Matsunaga S."/>
            <person name="Yonemura M."/>
            <person name="Uchiyama S."/>
            <person name="Azuma T."/>
            <person name="Fukui K."/>
        </authorList>
    </citation>
    <scope>IDENTIFICATION</scope>
    <scope>GENE FAMILY</scope>
    <scope>NOMENCLATURE</scope>
    <source>
        <strain>cv. Columbia</strain>
    </source>
</reference>
<reference key="5">
    <citation type="journal article" date="2013" name="Proc. Natl. Acad. Sci. U.S.A.">
        <title>Arabidopsis thaliana AHL family modulates hypocotyl growth redundantly by interacting with each other via the PPC/DUF296 domain.</title>
        <authorList>
            <person name="Zhao J."/>
            <person name="Favero D.S."/>
            <person name="Peng H."/>
            <person name="Neff M.M."/>
        </authorList>
    </citation>
    <scope>GENE FAMILY</scope>
    <scope>SUBUNIT</scope>
    <scope>INTERACTION WITH AHL27; AHL29 AND ATAF2/NAC081</scope>
    <scope>DOMAIN PPC</scope>
</reference>
<name>AHL12_ARATH</name>
<organism>
    <name type="scientific">Arabidopsis thaliana</name>
    <name type="common">Mouse-ear cress</name>
    <dbReference type="NCBI Taxonomy" id="3702"/>
    <lineage>
        <taxon>Eukaryota</taxon>
        <taxon>Viridiplantae</taxon>
        <taxon>Streptophyta</taxon>
        <taxon>Embryophyta</taxon>
        <taxon>Tracheophyta</taxon>
        <taxon>Spermatophyta</taxon>
        <taxon>Magnoliopsida</taxon>
        <taxon>eudicotyledons</taxon>
        <taxon>Gunneridae</taxon>
        <taxon>Pentapetalae</taxon>
        <taxon>rosids</taxon>
        <taxon>malvids</taxon>
        <taxon>Brassicales</taxon>
        <taxon>Brassicaceae</taxon>
        <taxon>Camelineae</taxon>
        <taxon>Arabidopsis</taxon>
    </lineage>
</organism>
<dbReference type="EMBL" id="AC008047">
    <property type="protein sequence ID" value="AAF19697.1"/>
    <property type="status" value="ALT_SEQ"/>
    <property type="molecule type" value="Genomic_DNA"/>
</dbReference>
<dbReference type="EMBL" id="CP002684">
    <property type="protein sequence ID" value="AEE34104.1"/>
    <property type="molecule type" value="Genomic_DNA"/>
</dbReference>
<dbReference type="EMBL" id="CP002684">
    <property type="protein sequence ID" value="ANM60201.1"/>
    <property type="molecule type" value="Genomic_DNA"/>
</dbReference>
<dbReference type="EMBL" id="AY070384">
    <property type="protein sequence ID" value="AAL49880.1"/>
    <property type="status" value="ALT_INIT"/>
    <property type="molecule type" value="mRNA"/>
</dbReference>
<dbReference type="EMBL" id="AY096576">
    <property type="protein sequence ID" value="AAM20226.1"/>
    <property type="molecule type" value="mRNA"/>
</dbReference>
<dbReference type="EMBL" id="BR000348">
    <property type="protein sequence ID" value="FAA00283.1"/>
    <property type="molecule type" value="mRNA"/>
</dbReference>
<dbReference type="RefSeq" id="NP_001322498.1">
    <property type="nucleotide sequence ID" value="NM_001334099.1"/>
</dbReference>
<dbReference type="RefSeq" id="NP_001322499.1">
    <property type="nucleotide sequence ID" value="NM_001334098.1"/>
</dbReference>
<dbReference type="RefSeq" id="NP_001322500.1">
    <property type="nucleotide sequence ID" value="NM_001334097.1"/>
</dbReference>
<dbReference type="RefSeq" id="NP_001322501.1">
    <property type="nucleotide sequence ID" value="NM_001334096.1"/>
</dbReference>
<dbReference type="RefSeq" id="NP_001322502.1">
    <property type="nucleotide sequence ID" value="NM_001334095.1"/>
</dbReference>
<dbReference type="RefSeq" id="NP_001322503.1">
    <property type="nucleotide sequence ID" value="NM_001334094.1"/>
</dbReference>
<dbReference type="RefSeq" id="NP_176537.2">
    <property type="nucleotide sequence ID" value="NM_105027.4"/>
</dbReference>
<dbReference type="SMR" id="Q8LPN5"/>
<dbReference type="FunCoup" id="Q8LPN5">
    <property type="interactions" value="550"/>
</dbReference>
<dbReference type="IntAct" id="Q8LPN5">
    <property type="interactions" value="4"/>
</dbReference>
<dbReference type="STRING" id="3702.Q8LPN5"/>
<dbReference type="iPTMnet" id="Q8LPN5"/>
<dbReference type="PaxDb" id="3702-AT1G63480.1"/>
<dbReference type="ProteomicsDB" id="244946"/>
<dbReference type="EnsemblPlants" id="AT1G63480.1">
    <property type="protein sequence ID" value="AT1G63480.1"/>
    <property type="gene ID" value="AT1G63480"/>
</dbReference>
<dbReference type="EnsemblPlants" id="AT1G63480.2">
    <property type="protein sequence ID" value="AT1G63480.2"/>
    <property type="gene ID" value="AT1G63480"/>
</dbReference>
<dbReference type="GeneID" id="842654"/>
<dbReference type="Gramene" id="AT1G63480.1">
    <property type="protein sequence ID" value="AT1G63480.1"/>
    <property type="gene ID" value="AT1G63480"/>
</dbReference>
<dbReference type="Gramene" id="AT1G63480.2">
    <property type="protein sequence ID" value="AT1G63480.2"/>
    <property type="gene ID" value="AT1G63480"/>
</dbReference>
<dbReference type="KEGG" id="ath:AT1G63480"/>
<dbReference type="Araport" id="AT1G63480"/>
<dbReference type="TAIR" id="AT1G63480">
    <property type="gene designation" value="AHL12"/>
</dbReference>
<dbReference type="eggNOG" id="ENOG502QUPI">
    <property type="taxonomic scope" value="Eukaryota"/>
</dbReference>
<dbReference type="HOGENOM" id="CLU_039808_0_2_1"/>
<dbReference type="InParanoid" id="Q8LPN5"/>
<dbReference type="PhylomeDB" id="Q8LPN5"/>
<dbReference type="PRO" id="PR:Q8LPN5"/>
<dbReference type="Proteomes" id="UP000006548">
    <property type="component" value="Chromosome 1"/>
</dbReference>
<dbReference type="ExpressionAtlas" id="Q8LPN5">
    <property type="expression patterns" value="baseline and differential"/>
</dbReference>
<dbReference type="GO" id="GO:0005634">
    <property type="term" value="C:nucleus"/>
    <property type="evidence" value="ECO:0007669"/>
    <property type="project" value="UniProtKB-SubCell"/>
</dbReference>
<dbReference type="GO" id="GO:0003680">
    <property type="term" value="F:minor groove of adenine-thymine-rich DNA binding"/>
    <property type="evidence" value="ECO:0007669"/>
    <property type="project" value="InterPro"/>
</dbReference>
<dbReference type="CDD" id="cd11378">
    <property type="entry name" value="DUF296"/>
    <property type="match status" value="1"/>
</dbReference>
<dbReference type="Gene3D" id="3.30.1330.80">
    <property type="entry name" value="Hypothetical protein, similar to alpha- acetolactate decarboxylase, domain 2"/>
    <property type="match status" value="1"/>
</dbReference>
<dbReference type="InterPro" id="IPR039605">
    <property type="entry name" value="AHL"/>
</dbReference>
<dbReference type="InterPro" id="IPR017956">
    <property type="entry name" value="AT_hook_DNA-bd_motif"/>
</dbReference>
<dbReference type="InterPro" id="IPR005175">
    <property type="entry name" value="PPC_dom"/>
</dbReference>
<dbReference type="PANTHER" id="PTHR31500:SF64">
    <property type="entry name" value="AT-HOOK MOTIF NUCLEAR-LOCALIZED PROTEIN 12-RELATED"/>
    <property type="match status" value="1"/>
</dbReference>
<dbReference type="PANTHER" id="PTHR31500">
    <property type="entry name" value="AT-HOOK MOTIF NUCLEAR-LOCALIZED PROTEIN 9"/>
    <property type="match status" value="1"/>
</dbReference>
<dbReference type="Pfam" id="PF03479">
    <property type="entry name" value="PCC"/>
    <property type="match status" value="1"/>
</dbReference>
<dbReference type="PRINTS" id="PR00929">
    <property type="entry name" value="ATHOOK"/>
</dbReference>
<dbReference type="SUPFAM" id="SSF117856">
    <property type="entry name" value="AF0104/ALDC/Ptd012-like"/>
    <property type="match status" value="1"/>
</dbReference>
<dbReference type="PROSITE" id="PS51742">
    <property type="entry name" value="PPC"/>
    <property type="match status" value="1"/>
</dbReference>
<sequence>MDGREAMAFPGSHSQYYLQRGAFTNLAPSQVASGLHAPPPHTGLRPMSNPNIHHPQANNPGPPFSDFGHTIHMGVVSSASDADVQPPPPPPPPEEPMVKRKRGRPRKYGEPMVSNKSRDSSPMSDPNEPKRARGRPPGTGRKQRLANLGEWMNTSAGLAFAPHVISIGAGEDIAAKVLSFSQQRPRALCIMSGTGTISSVTLCKPGSTDRHLTYEGPFEIISFGGSYLVNEEGGSRSRTGGLSVSLSRPDGSIIAGGVDMLIAANLVQVVACSFVYGARAKTHNNNNKTIRQEKEPNEEDNNSEMETTPGSAAEPAASAGQQTPQNFSSQGIRGWPGSGSGSGRSLDICRNPLTDFDLTRG</sequence>
<feature type="chain" id="PRO_0000432030" description="AT-hook motif nuclear-localized protein 12">
    <location>
        <begin position="1"/>
        <end position="361"/>
    </location>
</feature>
<feature type="domain" description="PPC" evidence="3">
    <location>
        <begin position="154"/>
        <end position="297"/>
    </location>
</feature>
<feature type="DNA-binding region" description="A.T hook 1" evidence="2">
    <location>
        <begin position="99"/>
        <end position="111"/>
    </location>
</feature>
<feature type="DNA-binding region" description="A.T hook 2" evidence="2">
    <location>
        <begin position="130"/>
        <end position="142"/>
    </location>
</feature>
<feature type="region of interest" description="Disordered" evidence="4">
    <location>
        <begin position="29"/>
        <end position="143"/>
    </location>
</feature>
<feature type="region of interest" description="Disordered" evidence="4">
    <location>
        <begin position="286"/>
        <end position="361"/>
    </location>
</feature>
<feature type="short sequence motif" description="Bipartite nuclear localization signal" evidence="7">
    <location>
        <begin position="99"/>
        <end position="107"/>
    </location>
</feature>
<feature type="compositionally biased region" description="Polar residues" evidence="4">
    <location>
        <begin position="48"/>
        <end position="59"/>
    </location>
</feature>
<feature type="compositionally biased region" description="Pro residues" evidence="4">
    <location>
        <begin position="85"/>
        <end position="95"/>
    </location>
</feature>
<feature type="compositionally biased region" description="Low complexity" evidence="4">
    <location>
        <begin position="306"/>
        <end position="322"/>
    </location>
</feature>
<proteinExistence type="evidence at protein level"/>
<accession>Q8LPN5</accession>
<accession>Q8VYP4</accession>
<accession>Q9SH33</accession>
<gene>
    <name evidence="6" type="primary">AHL12</name>
    <name evidence="8" type="ordered locus">At1g63480</name>
    <name evidence="9" type="ORF">F2K11.15</name>
</gene>